<organism>
    <name type="scientific">Escherichia coli O6:H1 (strain CFT073 / ATCC 700928 / UPEC)</name>
    <dbReference type="NCBI Taxonomy" id="199310"/>
    <lineage>
        <taxon>Bacteria</taxon>
        <taxon>Pseudomonadati</taxon>
        <taxon>Pseudomonadota</taxon>
        <taxon>Gammaproteobacteria</taxon>
        <taxon>Enterobacterales</taxon>
        <taxon>Enterobacteriaceae</taxon>
        <taxon>Escherichia</taxon>
    </lineage>
</organism>
<protein>
    <recommendedName>
        <fullName evidence="1">Large ribosomal subunit protein bL31B</fullName>
    </recommendedName>
    <alternativeName>
        <fullName evidence="2">50S ribosomal protein L31 type B</fullName>
    </alternativeName>
</protein>
<dbReference type="EMBL" id="AE014075">
    <property type="protein sequence ID" value="AAN78888.1"/>
    <property type="status" value="ALT_INIT"/>
    <property type="molecule type" value="Genomic_DNA"/>
</dbReference>
<dbReference type="RefSeq" id="WP_000803998.1">
    <property type="nucleotide sequence ID" value="NZ_CP051263.1"/>
</dbReference>
<dbReference type="SMR" id="P0A7N2"/>
<dbReference type="STRING" id="199310.c0407"/>
<dbReference type="KEGG" id="ecc:c0407"/>
<dbReference type="eggNOG" id="COG0254">
    <property type="taxonomic scope" value="Bacteria"/>
</dbReference>
<dbReference type="HOGENOM" id="CLU_114306_2_1_6"/>
<dbReference type="Proteomes" id="UP000001410">
    <property type="component" value="Chromosome"/>
</dbReference>
<dbReference type="GO" id="GO:1990904">
    <property type="term" value="C:ribonucleoprotein complex"/>
    <property type="evidence" value="ECO:0007669"/>
    <property type="project" value="UniProtKB-KW"/>
</dbReference>
<dbReference type="GO" id="GO:0005840">
    <property type="term" value="C:ribosome"/>
    <property type="evidence" value="ECO:0007669"/>
    <property type="project" value="UniProtKB-KW"/>
</dbReference>
<dbReference type="GO" id="GO:0003735">
    <property type="term" value="F:structural constituent of ribosome"/>
    <property type="evidence" value="ECO:0007669"/>
    <property type="project" value="InterPro"/>
</dbReference>
<dbReference type="GO" id="GO:0006412">
    <property type="term" value="P:translation"/>
    <property type="evidence" value="ECO:0007669"/>
    <property type="project" value="UniProtKB-UniRule"/>
</dbReference>
<dbReference type="FunFam" id="4.10.830.30:FF:000002">
    <property type="entry name" value="50S ribosomal protein L31 type B"/>
    <property type="match status" value="1"/>
</dbReference>
<dbReference type="Gene3D" id="4.10.830.30">
    <property type="entry name" value="Ribosomal protein L31"/>
    <property type="match status" value="1"/>
</dbReference>
<dbReference type="HAMAP" id="MF_00502">
    <property type="entry name" value="Ribosomal_bL31_2"/>
    <property type="match status" value="1"/>
</dbReference>
<dbReference type="InterPro" id="IPR034704">
    <property type="entry name" value="Ribosomal_bL28/bL31-like_sf"/>
</dbReference>
<dbReference type="InterPro" id="IPR002150">
    <property type="entry name" value="Ribosomal_bL31"/>
</dbReference>
<dbReference type="InterPro" id="IPR027493">
    <property type="entry name" value="Ribosomal_bL31_B"/>
</dbReference>
<dbReference type="InterPro" id="IPR042105">
    <property type="entry name" value="Ribosomal_bL31_sf"/>
</dbReference>
<dbReference type="NCBIfam" id="TIGR00105">
    <property type="entry name" value="L31"/>
    <property type="match status" value="1"/>
</dbReference>
<dbReference type="NCBIfam" id="NF002462">
    <property type="entry name" value="PRK01678.1"/>
    <property type="match status" value="1"/>
</dbReference>
<dbReference type="PANTHER" id="PTHR33280">
    <property type="entry name" value="50S RIBOSOMAL PROTEIN L31, CHLOROPLASTIC"/>
    <property type="match status" value="1"/>
</dbReference>
<dbReference type="PANTHER" id="PTHR33280:SF1">
    <property type="entry name" value="LARGE RIBOSOMAL SUBUNIT PROTEIN BL31C"/>
    <property type="match status" value="1"/>
</dbReference>
<dbReference type="Pfam" id="PF01197">
    <property type="entry name" value="Ribosomal_L31"/>
    <property type="match status" value="1"/>
</dbReference>
<dbReference type="PRINTS" id="PR01249">
    <property type="entry name" value="RIBOSOMALL31"/>
</dbReference>
<dbReference type="SUPFAM" id="SSF143800">
    <property type="entry name" value="L28p-like"/>
    <property type="match status" value="1"/>
</dbReference>
<dbReference type="PROSITE" id="PS01143">
    <property type="entry name" value="RIBOSOMAL_L31"/>
    <property type="match status" value="1"/>
</dbReference>
<proteinExistence type="inferred from homology"/>
<feature type="chain" id="PRO_0000173223" description="Large ribosomal subunit protein bL31B">
    <location>
        <begin position="1"/>
        <end position="87"/>
    </location>
</feature>
<sequence>MKPNIHPEYRTVVFHDTSVDEYFKIGSTIKTDREIELDGVTYPYVTIDVSSKSHPFYTGKLRTVASEGNVARFTQRFGRFVSTKKGA</sequence>
<comment type="subunit">
    <text evidence="1">Part of the 50S ribosomal subunit.</text>
</comment>
<comment type="similarity">
    <text evidence="1">Belongs to the bacterial ribosomal protein bL31 family. Type B subfamily.</text>
</comment>
<comment type="sequence caution" evidence="2">
    <conflict type="erroneous initiation">
        <sequence resource="EMBL-CDS" id="AAN78888"/>
    </conflict>
</comment>
<keyword id="KW-1185">Reference proteome</keyword>
<keyword id="KW-0687">Ribonucleoprotein</keyword>
<keyword id="KW-0689">Ribosomal protein</keyword>
<reference key="1">
    <citation type="journal article" date="2002" name="Proc. Natl. Acad. Sci. U.S.A.">
        <title>Extensive mosaic structure revealed by the complete genome sequence of uropathogenic Escherichia coli.</title>
        <authorList>
            <person name="Welch R.A."/>
            <person name="Burland V."/>
            <person name="Plunkett G. III"/>
            <person name="Redford P."/>
            <person name="Roesch P."/>
            <person name="Rasko D."/>
            <person name="Buckles E.L."/>
            <person name="Liou S.-R."/>
            <person name="Boutin A."/>
            <person name="Hackett J."/>
            <person name="Stroud D."/>
            <person name="Mayhew G.F."/>
            <person name="Rose D.J."/>
            <person name="Zhou S."/>
            <person name="Schwartz D.C."/>
            <person name="Perna N.T."/>
            <person name="Mobley H.L.T."/>
            <person name="Donnenberg M.S."/>
            <person name="Blattner F.R."/>
        </authorList>
    </citation>
    <scope>NUCLEOTIDE SEQUENCE [LARGE SCALE GENOMIC DNA]</scope>
    <source>
        <strain>CFT073 / ATCC 700928 / UPEC</strain>
    </source>
</reference>
<name>RL31B_ECOL6</name>
<accession>P0A7N2</accession>
<accession>P71302</accession>
<gene>
    <name evidence="1" type="primary">rpmE2</name>
    <name type="ordered locus">c0407</name>
</gene>
<evidence type="ECO:0000255" key="1">
    <source>
        <dbReference type="HAMAP-Rule" id="MF_00502"/>
    </source>
</evidence>
<evidence type="ECO:0000305" key="2"/>